<sequence>MWRWIRQQLGFDPPHQSDTRTIYVANRFPQNGLYTPQKFIDNRIISSKYTVWNFVPKNLFEQFRRVANFYFLIIFLVQLMIDTPTSPVTSGLPLFFVITVTAIKQGYEDWLRHNSDNEVNGAPVYVVRSGGLVKTRSKNIRVGDIVRIAKDEIFPADLVLLSSDRLDGSCHVTTASLDGETNLKTHVAVPETALLQTVANLDTLVAVIECQQPEADLYRFMGRMIITQQMEEIVRPLGPESLLLRGARLKNTKEIFGVAVYTGMETKMALNYKSKSQKRSAVEKSMNTFLIIYLVILISEAVISTILKYTWQAEEKWDEPWYNQKTEHQRNSSKILRFISDFLAFLVLYNFIIPISLYVTVEMQKFLGSFFIGWDLDLYHEESDQKAQVNTSDLNEELGQVEYVFTDKTGTLTENEMQFRECSINGMKYQEINGRLVPEGPTPDSSEGNLSYLSSLSHLNNLSHLTTSSSFRTSPENETELIKEHDLFFKAVSLCHTVQISNVQTDCTGDGPWQSNLAPSQLEYYASSPDEKALVEAAARIGIVFIGNSEETMEVKTLGKLERYKLLHILEFDSDRRRMSVIVQAPSGEKLLFAKGAESSILPKCIGGEIEKTRIHVDEFALKGLRTLCIAYRKFTSKEYEEIDKRIFEARTALQQREEKLAAVFQFIEKDLILLGATAVEDRLQDKVRETIEALRMAGIKVWVLTGDKHETAVSVSLSCGHFHRTMNILELINQKSDSECAEQLRQLARRITEDHVIQHGLVVDGTSLSLALREHEKLFMEVCRNCSAVLCCRMAPLQKAKVIRLIKISPEKPITLAVGDGANDVSMIQEAHVGIGIMGKEGRQAARNSDYAIARFKFLSKLLFVHGHFYYIRIATLVQYFFYKNVCFITPQFLYQFYCLFSQQTLYDSVYLTLYNICFTSLPILIYSLLEQHVDPHVLQNKPTLYRDISKNRLLSIKTFLYWTILGFSHAFIFFFGSYLLIGKDTSLLGNGQMFGNWTFGTLVFTVMVITVTVKMALETHFWTWINHLVTWGSIIFYFVFSLFYGGILWPFLGSQNMYFVFIQLLSSGSAWFAIILMVVTCLFLDIIKKVFDRHLHPTSTEKAQLTETNAGIKCLDSMCCFPEGEAACASVGRMLERVIGRCSPTHISRSWSASDPFYTNDRSILTLSTMDSSTC</sequence>
<accession>Q9Y2G3</accession>
<accession>Q96FN1</accession>
<accession>Q9UKK7</accession>
<protein>
    <recommendedName>
        <fullName>Phospholipid-transporting ATPase IF</fullName>
        <ecNumber evidence="8">7.6.2.1</ecNumber>
    </recommendedName>
    <alternativeName>
        <fullName>ATPase IR</fullName>
    </alternativeName>
    <alternativeName>
        <fullName>ATPase class VI type 11B</fullName>
    </alternativeName>
    <alternativeName>
        <fullName>P4-ATPase flippase complex alpha subunit ATP11B</fullName>
    </alternativeName>
</protein>
<proteinExistence type="evidence at protein level"/>
<reference key="1">
    <citation type="journal article" date="1999" name="Physiol. Genomics">
        <title>Differential expression of putative transbilayer amphipath transporters.</title>
        <authorList>
            <person name="Halleck M.S."/>
            <person name="Lawler J.F. Jr."/>
            <person name="Blackshaw S."/>
            <person name="Gao L."/>
            <person name="Nagarajan P."/>
            <person name="Hacker C."/>
            <person name="Pyle S."/>
            <person name="Newman J.T."/>
            <person name="Nakanishi Y."/>
            <person name="Ando H."/>
            <person name="Weinstock D."/>
            <person name="Williamson P.L."/>
            <person name="Schlegel R.A."/>
        </authorList>
    </citation>
    <scope>NUCLEOTIDE SEQUENCE [MRNA] OF 1-248</scope>
    <source>
        <tissue>Colon</tissue>
    </source>
</reference>
<reference key="2">
    <citation type="journal article" date="2006" name="Nature">
        <title>The DNA sequence, annotation and analysis of human chromosome 3.</title>
        <authorList>
            <person name="Muzny D.M."/>
            <person name="Scherer S.E."/>
            <person name="Kaul R."/>
            <person name="Wang J."/>
            <person name="Yu J."/>
            <person name="Sudbrak R."/>
            <person name="Buhay C.J."/>
            <person name="Chen R."/>
            <person name="Cree A."/>
            <person name="Ding Y."/>
            <person name="Dugan-Rocha S."/>
            <person name="Gill R."/>
            <person name="Gunaratne P."/>
            <person name="Harris R.A."/>
            <person name="Hawes A.C."/>
            <person name="Hernandez J."/>
            <person name="Hodgson A.V."/>
            <person name="Hume J."/>
            <person name="Jackson A."/>
            <person name="Khan Z.M."/>
            <person name="Kovar-Smith C."/>
            <person name="Lewis L.R."/>
            <person name="Lozado R.J."/>
            <person name="Metzker M.L."/>
            <person name="Milosavljevic A."/>
            <person name="Miner G.R."/>
            <person name="Morgan M.B."/>
            <person name="Nazareth L.V."/>
            <person name="Scott G."/>
            <person name="Sodergren E."/>
            <person name="Song X.-Z."/>
            <person name="Steffen D."/>
            <person name="Wei S."/>
            <person name="Wheeler D.A."/>
            <person name="Wright M.W."/>
            <person name="Worley K.C."/>
            <person name="Yuan Y."/>
            <person name="Zhang Z."/>
            <person name="Adams C.Q."/>
            <person name="Ansari-Lari M.A."/>
            <person name="Ayele M."/>
            <person name="Brown M.J."/>
            <person name="Chen G."/>
            <person name="Chen Z."/>
            <person name="Clendenning J."/>
            <person name="Clerc-Blankenburg K.P."/>
            <person name="Chen R."/>
            <person name="Chen Z."/>
            <person name="Davis C."/>
            <person name="Delgado O."/>
            <person name="Dinh H.H."/>
            <person name="Dong W."/>
            <person name="Draper H."/>
            <person name="Ernst S."/>
            <person name="Fu G."/>
            <person name="Gonzalez-Garay M.L."/>
            <person name="Garcia D.K."/>
            <person name="Gillett W."/>
            <person name="Gu J."/>
            <person name="Hao B."/>
            <person name="Haugen E."/>
            <person name="Havlak P."/>
            <person name="He X."/>
            <person name="Hennig S."/>
            <person name="Hu S."/>
            <person name="Huang W."/>
            <person name="Jackson L.R."/>
            <person name="Jacob L.S."/>
            <person name="Kelly S.H."/>
            <person name="Kube M."/>
            <person name="Levy R."/>
            <person name="Li Z."/>
            <person name="Liu B."/>
            <person name="Liu J."/>
            <person name="Liu W."/>
            <person name="Lu J."/>
            <person name="Maheshwari M."/>
            <person name="Nguyen B.-V."/>
            <person name="Okwuonu G.O."/>
            <person name="Palmeiri A."/>
            <person name="Pasternak S."/>
            <person name="Perez L.M."/>
            <person name="Phelps K.A."/>
            <person name="Plopper F.J."/>
            <person name="Qiang B."/>
            <person name="Raymond C."/>
            <person name="Rodriguez R."/>
            <person name="Saenphimmachak C."/>
            <person name="Santibanez J."/>
            <person name="Shen H."/>
            <person name="Shen Y."/>
            <person name="Subramanian S."/>
            <person name="Tabor P.E."/>
            <person name="Verduzco D."/>
            <person name="Waldron L."/>
            <person name="Wang J."/>
            <person name="Wang J."/>
            <person name="Wang Q."/>
            <person name="Williams G.A."/>
            <person name="Wong G.K.-S."/>
            <person name="Yao Z."/>
            <person name="Zhang J."/>
            <person name="Zhang X."/>
            <person name="Zhao G."/>
            <person name="Zhou J."/>
            <person name="Zhou Y."/>
            <person name="Nelson D."/>
            <person name="Lehrach H."/>
            <person name="Reinhardt R."/>
            <person name="Naylor S.L."/>
            <person name="Yang H."/>
            <person name="Olson M."/>
            <person name="Weinstock G."/>
            <person name="Gibbs R.A."/>
        </authorList>
    </citation>
    <scope>NUCLEOTIDE SEQUENCE [LARGE SCALE GENOMIC DNA]</scope>
</reference>
<reference key="3">
    <citation type="journal article" date="2004" name="Genome Res.">
        <title>The status, quality, and expansion of the NIH full-length cDNA project: the Mammalian Gene Collection (MGC).</title>
        <authorList>
            <consortium name="The MGC Project Team"/>
        </authorList>
    </citation>
    <scope>NUCLEOTIDE SEQUENCE [LARGE SCALE MRNA] OF 1-195 AND 540-1177</scope>
    <source>
        <tissue>Colon</tissue>
        <tissue>Mammary gland</tissue>
    </source>
</reference>
<reference key="4">
    <citation type="journal article" date="2002" name="J. Biol. Chem.">
        <title>Reanalysis of ATP11B, a Type IV P-type ATPase.</title>
        <authorList>
            <person name="Halleck M.S."/>
            <person name="Schlegel R.A."/>
            <person name="Williamson P.L."/>
        </authorList>
    </citation>
    <scope>NUCLEOTIDE SEQUENCE [MRNA] OF 111-450</scope>
</reference>
<reference key="5">
    <citation type="journal article" date="1999" name="DNA Res.">
        <title>Prediction of the coding sequences of unidentified human genes. XIII. The complete sequences of 100 new cDNA clones from brain which code for large proteins in vitro.</title>
        <authorList>
            <person name="Nagase T."/>
            <person name="Ishikawa K."/>
            <person name="Suyama M."/>
            <person name="Kikuno R."/>
            <person name="Hirosawa M."/>
            <person name="Miyajima N."/>
            <person name="Tanaka A."/>
            <person name="Kotani H."/>
            <person name="Nomura N."/>
            <person name="Ohara O."/>
        </authorList>
    </citation>
    <scope>NUCLEOTIDE SEQUENCE [LARGE SCALE MRNA] OF 440-1111</scope>
    <source>
        <tissue>Brain</tissue>
    </source>
</reference>
<reference key="6">
    <citation type="journal article" date="2007" name="BMC Genomics">
        <title>The full-ORF clone resource of the German cDNA consortium.</title>
        <authorList>
            <person name="Bechtel S."/>
            <person name="Rosenfelder H."/>
            <person name="Duda A."/>
            <person name="Schmidt C.P."/>
            <person name="Ernst U."/>
            <person name="Wellenreuther R."/>
            <person name="Mehrle A."/>
            <person name="Schuster C."/>
            <person name="Bahr A."/>
            <person name="Bloecker H."/>
            <person name="Heubner D."/>
            <person name="Hoerlein A."/>
            <person name="Michel G."/>
            <person name="Wedler H."/>
            <person name="Koehrer K."/>
            <person name="Ottenwaelder B."/>
            <person name="Poustka A."/>
            <person name="Wiemann S."/>
            <person name="Schupp I."/>
        </authorList>
    </citation>
    <scope>NUCLEOTIDE SEQUENCE [LARGE SCALE MRNA] OF 688-1111</scope>
    <source>
        <tissue>Testis</tissue>
    </source>
</reference>
<reference key="7">
    <citation type="journal article" date="2009" name="Sci. Signal.">
        <title>Quantitative phosphoproteomic analysis of T cell receptor signaling reveals system-wide modulation of protein-protein interactions.</title>
        <authorList>
            <person name="Mayya V."/>
            <person name="Lundgren D.H."/>
            <person name="Hwang S.-I."/>
            <person name="Rezaul K."/>
            <person name="Wu L."/>
            <person name="Eng J.K."/>
            <person name="Rodionov V."/>
            <person name="Han D.K."/>
        </authorList>
    </citation>
    <scope>PHOSPHORYLATION [LARGE SCALE ANALYSIS] AT SER-1154</scope>
    <scope>IDENTIFICATION BY MASS SPECTROMETRY [LARGE SCALE ANALYSIS]</scope>
    <source>
        <tissue>Leukemic T-cell</tissue>
    </source>
</reference>
<reference key="8">
    <citation type="journal article" date="2011" name="J. Biol. Chem.">
        <title>ATP9B, a P4-ATPase (a putative aminophospholipid translocase), localizes to the trans-Golgi network in a CDC50 protein-independent manner.</title>
        <authorList>
            <person name="Takatsu H."/>
            <person name="Baba K."/>
            <person name="Shima T."/>
            <person name="Umino H."/>
            <person name="Kato U."/>
            <person name="Umeda M."/>
            <person name="Nakayama K."/>
            <person name="Shin H.W."/>
        </authorList>
    </citation>
    <scope>INTERACTION WITH TMEM30A</scope>
    <scope>SUBCELLULAR LOCATION</scope>
</reference>
<reference key="9">
    <citation type="journal article" date="2013" name="J. Clin. Invest.">
        <title>ATP11B mediates platinum resistance in ovarian cancer.</title>
        <authorList>
            <person name="Moreno-Smith M."/>
            <person name="Halder J.B."/>
            <person name="Meltzer P.S."/>
            <person name="Gonda T.A."/>
            <person name="Mangala L.S."/>
            <person name="Rupaimoole R."/>
            <person name="Lu C."/>
            <person name="Nagaraja A.S."/>
            <person name="Gharpure K.M."/>
            <person name="Kang Y."/>
            <person name="Rodriguez-Aguayo C."/>
            <person name="Vivas-Mejia P.E."/>
            <person name="Zand B."/>
            <person name="Schmandt R."/>
            <person name="Wang H."/>
            <person name="Langley R.R."/>
            <person name="Jennings N.B."/>
            <person name="Ivan C."/>
            <person name="Coffin J.E."/>
            <person name="Armaiz G.N."/>
            <person name="Bottsford-Miller J."/>
            <person name="Kim S.B."/>
            <person name="Halleck M.S."/>
            <person name="Hendrix M.J."/>
            <person name="Bornman W."/>
            <person name="Bar-Eli M."/>
            <person name="Lee J.S."/>
            <person name="Siddik Z.H."/>
            <person name="Lopez-Berestein G."/>
            <person name="Sood A.K."/>
        </authorList>
    </citation>
    <scope>SUBCELLULAR LOCATION</scope>
</reference>
<reference key="10">
    <citation type="journal article" date="2013" name="J. Proteome Res.">
        <title>Toward a comprehensive characterization of a human cancer cell phosphoproteome.</title>
        <authorList>
            <person name="Zhou H."/>
            <person name="Di Palma S."/>
            <person name="Preisinger C."/>
            <person name="Peng M."/>
            <person name="Polat A.N."/>
            <person name="Heck A.J."/>
            <person name="Mohammed S."/>
        </authorList>
    </citation>
    <scope>PHOSPHORYLATION [LARGE SCALE ANALYSIS] AT SER-1154</scope>
    <scope>IDENTIFICATION BY MASS SPECTROMETRY [LARGE SCALE ANALYSIS]</scope>
    <source>
        <tissue>Cervix carcinoma</tissue>
        <tissue>Erythroleukemia</tissue>
    </source>
</reference>
<reference key="11">
    <citation type="journal article" date="2014" name="J. Proteomics">
        <title>An enzyme assisted RP-RPLC approach for in-depth analysis of human liver phosphoproteome.</title>
        <authorList>
            <person name="Bian Y."/>
            <person name="Song C."/>
            <person name="Cheng K."/>
            <person name="Dong M."/>
            <person name="Wang F."/>
            <person name="Huang J."/>
            <person name="Sun D."/>
            <person name="Wang L."/>
            <person name="Ye M."/>
            <person name="Zou H."/>
        </authorList>
    </citation>
    <scope>PHOSPHORYLATION [LARGE SCALE ANALYSIS] AT SER-1154</scope>
    <scope>IDENTIFICATION BY MASS SPECTROMETRY [LARGE SCALE ANALYSIS]</scope>
    <source>
        <tissue>Liver</tissue>
    </source>
</reference>
<reference key="12">
    <citation type="journal article" date="2018" name="Sci. Rep.">
        <title>Proteomic Analysis and Functional Characterization of P4-ATPase Phospholipid Flippases from Murine Tissues.</title>
        <authorList>
            <person name="Wang J."/>
            <person name="Molday L.L."/>
            <person name="Hii T."/>
            <person name="Coleman J.A."/>
            <person name="Wen T."/>
            <person name="Andersen J.P."/>
            <person name="Molday R.S."/>
        </authorList>
    </citation>
    <scope>FUNCTION</scope>
    <scope>CATALYTIC ACTIVITY</scope>
    <scope>ACTIVITY REGULATION</scope>
    <scope>BIOPHYSICOCHEMICAL PROPERTIES</scope>
    <scope>INTERACTION WITH TMEM30A</scope>
    <scope>MUTAGENESIS OF GLU-180</scope>
</reference>
<keyword id="KW-0067">ATP-binding</keyword>
<keyword id="KW-0256">Endoplasmic reticulum</keyword>
<keyword id="KW-0967">Endosome</keyword>
<keyword id="KW-0333">Golgi apparatus</keyword>
<keyword id="KW-0445">Lipid transport</keyword>
<keyword id="KW-0460">Magnesium</keyword>
<keyword id="KW-0472">Membrane</keyword>
<keyword id="KW-0479">Metal-binding</keyword>
<keyword id="KW-0547">Nucleotide-binding</keyword>
<keyword id="KW-0597">Phosphoprotein</keyword>
<keyword id="KW-1267">Proteomics identification</keyword>
<keyword id="KW-1185">Reference proteome</keyword>
<keyword id="KW-1278">Translocase</keyword>
<keyword id="KW-0812">Transmembrane</keyword>
<keyword id="KW-1133">Transmembrane helix</keyword>
<keyword id="KW-0813">Transport</keyword>
<evidence type="ECO:0000250" key="1">
    <source>
        <dbReference type="UniProtKB" id="P04191"/>
    </source>
</evidence>
<evidence type="ECO:0000250" key="2">
    <source>
        <dbReference type="UniProtKB" id="Q8NB49"/>
    </source>
</evidence>
<evidence type="ECO:0000250" key="3">
    <source>
        <dbReference type="UniProtKB" id="Q9HD20"/>
    </source>
</evidence>
<evidence type="ECO:0000250" key="4">
    <source>
        <dbReference type="UniProtKB" id="Q9Y2Q0"/>
    </source>
</evidence>
<evidence type="ECO:0000255" key="5"/>
<evidence type="ECO:0000269" key="6">
    <source>
    </source>
</evidence>
<evidence type="ECO:0000269" key="7">
    <source>
    </source>
</evidence>
<evidence type="ECO:0000269" key="8">
    <source>
    </source>
</evidence>
<evidence type="ECO:0000305" key="9"/>
<evidence type="ECO:0000305" key="10">
    <source>
    </source>
</evidence>
<evidence type="ECO:0007744" key="11">
    <source>
    </source>
</evidence>
<evidence type="ECO:0007744" key="12">
    <source>
    </source>
</evidence>
<evidence type="ECO:0007744" key="13">
    <source>
    </source>
</evidence>
<gene>
    <name type="primary">ATP11B</name>
    <name type="synonym">ATPIF</name>
    <name type="synonym">ATPIR</name>
    <name type="synonym">KIAA0956</name>
</gene>
<dbReference type="EC" id="7.6.2.1" evidence="8"/>
<dbReference type="EMBL" id="AF156548">
    <property type="protein sequence ID" value="AAF09446.1"/>
    <property type="molecule type" value="mRNA"/>
</dbReference>
<dbReference type="EMBL" id="AC069431">
    <property type="status" value="NOT_ANNOTATED_CDS"/>
    <property type="molecule type" value="Genomic_DNA"/>
</dbReference>
<dbReference type="EMBL" id="BC042180">
    <property type="protein sequence ID" value="AAH42180.1"/>
    <property type="status" value="ALT_SEQ"/>
    <property type="molecule type" value="mRNA"/>
</dbReference>
<dbReference type="EMBL" id="BC010630">
    <property type="protein sequence ID" value="AAH10630.1"/>
    <property type="status" value="ALT_FRAME"/>
    <property type="molecule type" value="mRNA"/>
</dbReference>
<dbReference type="EMBL" id="AB023173">
    <property type="protein sequence ID" value="BAA76800.1"/>
    <property type="molecule type" value="mRNA"/>
</dbReference>
<dbReference type="EMBL" id="AL133061">
    <property type="protein sequence ID" value="CAB61385.1"/>
    <property type="molecule type" value="mRNA"/>
</dbReference>
<dbReference type="CCDS" id="CCDS33896.1"/>
<dbReference type="PIR" id="T42662">
    <property type="entry name" value="T42662"/>
</dbReference>
<dbReference type="RefSeq" id="NP_055431.1">
    <property type="nucleotide sequence ID" value="NM_014616.3"/>
</dbReference>
<dbReference type="SMR" id="Q9Y2G3"/>
<dbReference type="BioGRID" id="116809">
    <property type="interactions" value="10"/>
</dbReference>
<dbReference type="ComplexPortal" id="CPX-6311">
    <property type="entry name" value="ATP11B-CDC50A P4-ATPase complex"/>
</dbReference>
<dbReference type="FunCoup" id="Q9Y2G3">
    <property type="interactions" value="1084"/>
</dbReference>
<dbReference type="IntAct" id="Q9Y2G3">
    <property type="interactions" value="4"/>
</dbReference>
<dbReference type="STRING" id="9606.ENSP00000321195"/>
<dbReference type="TCDB" id="3.A.3.8.12">
    <property type="family name" value="the p-type atpase (p-atpase) superfamily"/>
</dbReference>
<dbReference type="GlyGen" id="Q9Y2G3">
    <property type="glycosylation" value="2 sites, 1 O-linked glycan (1 site)"/>
</dbReference>
<dbReference type="iPTMnet" id="Q9Y2G3"/>
<dbReference type="PhosphoSitePlus" id="Q9Y2G3"/>
<dbReference type="SwissPalm" id="Q9Y2G3"/>
<dbReference type="BioMuta" id="ATP11B"/>
<dbReference type="DMDM" id="30316395"/>
<dbReference type="jPOST" id="Q9Y2G3"/>
<dbReference type="MassIVE" id="Q9Y2G3"/>
<dbReference type="PaxDb" id="9606-ENSP00000321195"/>
<dbReference type="PeptideAtlas" id="Q9Y2G3"/>
<dbReference type="ProteomicsDB" id="85764"/>
<dbReference type="Pumba" id="Q9Y2G3"/>
<dbReference type="Antibodypedia" id="33765">
    <property type="antibodies" value="133 antibodies from 30 providers"/>
</dbReference>
<dbReference type="DNASU" id="23200"/>
<dbReference type="Ensembl" id="ENST00000323116.10">
    <property type="protein sequence ID" value="ENSP00000321195.5"/>
    <property type="gene ID" value="ENSG00000058063.17"/>
</dbReference>
<dbReference type="GeneID" id="23200"/>
<dbReference type="KEGG" id="hsa:23200"/>
<dbReference type="MANE-Select" id="ENST00000323116.10">
    <property type="protein sequence ID" value="ENSP00000321195.5"/>
    <property type="RefSeq nucleotide sequence ID" value="NM_014616.3"/>
    <property type="RefSeq protein sequence ID" value="NP_055431.1"/>
</dbReference>
<dbReference type="UCSC" id="uc003fla.3">
    <property type="organism name" value="human"/>
</dbReference>
<dbReference type="AGR" id="HGNC:13553"/>
<dbReference type="CTD" id="23200"/>
<dbReference type="DisGeNET" id="23200"/>
<dbReference type="GeneCards" id="ATP11B"/>
<dbReference type="HGNC" id="HGNC:13553">
    <property type="gene designation" value="ATP11B"/>
</dbReference>
<dbReference type="HPA" id="ENSG00000058063">
    <property type="expression patterns" value="Low tissue specificity"/>
</dbReference>
<dbReference type="MIM" id="605869">
    <property type="type" value="gene"/>
</dbReference>
<dbReference type="neXtProt" id="NX_Q9Y2G3"/>
<dbReference type="OpenTargets" id="ENSG00000058063"/>
<dbReference type="PharmGKB" id="PA25102"/>
<dbReference type="VEuPathDB" id="HostDB:ENSG00000058063"/>
<dbReference type="eggNOG" id="KOG0206">
    <property type="taxonomic scope" value="Eukaryota"/>
</dbReference>
<dbReference type="GeneTree" id="ENSGT00940000156162"/>
<dbReference type="HOGENOM" id="CLU_000846_3_1_1"/>
<dbReference type="InParanoid" id="Q9Y2G3"/>
<dbReference type="OMA" id="QMYGNDK"/>
<dbReference type="OrthoDB" id="377733at2759"/>
<dbReference type="PAN-GO" id="Q9Y2G3">
    <property type="GO annotations" value="6 GO annotations based on evolutionary models"/>
</dbReference>
<dbReference type="PhylomeDB" id="Q9Y2G3"/>
<dbReference type="TreeFam" id="TF326897"/>
<dbReference type="PathwayCommons" id="Q9Y2G3"/>
<dbReference type="Reactome" id="R-HSA-6798695">
    <property type="pathway name" value="Neutrophil degranulation"/>
</dbReference>
<dbReference type="Reactome" id="R-HSA-936837">
    <property type="pathway name" value="Ion transport by P-type ATPases"/>
</dbReference>
<dbReference type="SABIO-RK" id="Q9Y2G3"/>
<dbReference type="SignaLink" id="Q9Y2G3"/>
<dbReference type="BioGRID-ORCS" id="23200">
    <property type="hits" value="15 hits in 1152 CRISPR screens"/>
</dbReference>
<dbReference type="ChiTaRS" id="ATP11B">
    <property type="organism name" value="human"/>
</dbReference>
<dbReference type="GeneWiki" id="ATP11B"/>
<dbReference type="GenomeRNAi" id="23200"/>
<dbReference type="Pharos" id="Q9Y2G3">
    <property type="development level" value="Tbio"/>
</dbReference>
<dbReference type="PRO" id="PR:Q9Y2G3"/>
<dbReference type="Proteomes" id="UP000005640">
    <property type="component" value="Chromosome 3"/>
</dbReference>
<dbReference type="RNAct" id="Q9Y2G3">
    <property type="molecule type" value="protein"/>
</dbReference>
<dbReference type="Bgee" id="ENSG00000058063">
    <property type="expression patterns" value="Expressed in calcaneal tendon and 208 other cell types or tissues"/>
</dbReference>
<dbReference type="ExpressionAtlas" id="Q9Y2G3">
    <property type="expression patterns" value="baseline and differential"/>
</dbReference>
<dbReference type="GO" id="GO:0035577">
    <property type="term" value="C:azurophil granule membrane"/>
    <property type="evidence" value="ECO:0000304"/>
    <property type="project" value="Reactome"/>
</dbReference>
<dbReference type="GO" id="GO:0031901">
    <property type="term" value="C:early endosome membrane"/>
    <property type="evidence" value="ECO:0000314"/>
    <property type="project" value="ComplexPortal"/>
</dbReference>
<dbReference type="GO" id="GO:0005783">
    <property type="term" value="C:endoplasmic reticulum"/>
    <property type="evidence" value="ECO:0000314"/>
    <property type="project" value="UniProtKB"/>
</dbReference>
<dbReference type="GO" id="GO:0005794">
    <property type="term" value="C:Golgi apparatus"/>
    <property type="evidence" value="ECO:0007669"/>
    <property type="project" value="UniProtKB-SubCell"/>
</dbReference>
<dbReference type="GO" id="GO:0016020">
    <property type="term" value="C:membrane"/>
    <property type="evidence" value="ECO:0000353"/>
    <property type="project" value="ComplexPortal"/>
</dbReference>
<dbReference type="GO" id="GO:0005637">
    <property type="term" value="C:nuclear inner membrane"/>
    <property type="evidence" value="ECO:0000303"/>
    <property type="project" value="UniProtKB"/>
</dbReference>
<dbReference type="GO" id="GO:1990531">
    <property type="term" value="C:phospholipid-translocating ATPase complex"/>
    <property type="evidence" value="ECO:0000353"/>
    <property type="project" value="ComplexPortal"/>
</dbReference>
<dbReference type="GO" id="GO:0005886">
    <property type="term" value="C:plasma membrane"/>
    <property type="evidence" value="ECO:0000318"/>
    <property type="project" value="GO_Central"/>
</dbReference>
<dbReference type="GO" id="GO:0055037">
    <property type="term" value="C:recycling endosome"/>
    <property type="evidence" value="ECO:0000314"/>
    <property type="project" value="UniProtKB"/>
</dbReference>
<dbReference type="GO" id="GO:0055038">
    <property type="term" value="C:recycling endosome membrane"/>
    <property type="evidence" value="ECO:0007669"/>
    <property type="project" value="UniProtKB-SubCell"/>
</dbReference>
<dbReference type="GO" id="GO:0005524">
    <property type="term" value="F:ATP binding"/>
    <property type="evidence" value="ECO:0007669"/>
    <property type="project" value="UniProtKB-KW"/>
</dbReference>
<dbReference type="GO" id="GO:0016887">
    <property type="term" value="F:ATP hydrolysis activity"/>
    <property type="evidence" value="ECO:0007669"/>
    <property type="project" value="InterPro"/>
</dbReference>
<dbReference type="GO" id="GO:0140326">
    <property type="term" value="F:ATPase-coupled intramembrane lipid transporter activity"/>
    <property type="evidence" value="ECO:0000318"/>
    <property type="project" value="GO_Central"/>
</dbReference>
<dbReference type="GO" id="GO:0000287">
    <property type="term" value="F:magnesium ion binding"/>
    <property type="evidence" value="ECO:0007669"/>
    <property type="project" value="InterPro"/>
</dbReference>
<dbReference type="GO" id="GO:0015075">
    <property type="term" value="F:monoatomic ion transmembrane transporter activity"/>
    <property type="evidence" value="ECO:0000303"/>
    <property type="project" value="UniProtKB"/>
</dbReference>
<dbReference type="GO" id="GO:0090556">
    <property type="term" value="F:phosphatidylserine floppase activity"/>
    <property type="evidence" value="ECO:0007669"/>
    <property type="project" value="RHEA"/>
</dbReference>
<dbReference type="GO" id="GO:0015917">
    <property type="term" value="P:aminophospholipid transport"/>
    <property type="evidence" value="ECO:0000304"/>
    <property type="project" value="UniProtKB"/>
</dbReference>
<dbReference type="GO" id="GO:0034220">
    <property type="term" value="P:monoatomic ion transmembrane transport"/>
    <property type="evidence" value="ECO:0000304"/>
    <property type="project" value="Reactome"/>
</dbReference>
<dbReference type="GO" id="GO:0006811">
    <property type="term" value="P:monoatomic ion transport"/>
    <property type="evidence" value="ECO:0000303"/>
    <property type="project" value="UniProtKB"/>
</dbReference>
<dbReference type="GO" id="GO:0045332">
    <property type="term" value="P:phospholipid translocation"/>
    <property type="evidence" value="ECO:0000318"/>
    <property type="project" value="GO_Central"/>
</dbReference>
<dbReference type="CDD" id="cd02073">
    <property type="entry name" value="P-type_ATPase_APLT_Dnf-like"/>
    <property type="match status" value="1"/>
</dbReference>
<dbReference type="FunFam" id="2.70.150.10:FF:000013">
    <property type="entry name" value="Phospholipid-transporting ATPase"/>
    <property type="match status" value="1"/>
</dbReference>
<dbReference type="FunFam" id="3.40.1110.10:FF:000019">
    <property type="entry name" value="Phospholipid-transporting ATPase"/>
    <property type="match status" value="1"/>
</dbReference>
<dbReference type="FunFam" id="3.40.50.1000:FF:000034">
    <property type="entry name" value="Phospholipid-transporting ATPase"/>
    <property type="match status" value="1"/>
</dbReference>
<dbReference type="Gene3D" id="3.40.1110.10">
    <property type="entry name" value="Calcium-transporting ATPase, cytoplasmic domain N"/>
    <property type="match status" value="1"/>
</dbReference>
<dbReference type="Gene3D" id="2.70.150.10">
    <property type="entry name" value="Calcium-transporting ATPase, cytoplasmic transduction domain A"/>
    <property type="match status" value="1"/>
</dbReference>
<dbReference type="Gene3D" id="3.40.50.1000">
    <property type="entry name" value="HAD superfamily/HAD-like"/>
    <property type="match status" value="1"/>
</dbReference>
<dbReference type="InterPro" id="IPR023299">
    <property type="entry name" value="ATPase_P-typ_cyto_dom_N"/>
</dbReference>
<dbReference type="InterPro" id="IPR018303">
    <property type="entry name" value="ATPase_P-typ_P_site"/>
</dbReference>
<dbReference type="InterPro" id="IPR023298">
    <property type="entry name" value="ATPase_P-typ_TM_dom_sf"/>
</dbReference>
<dbReference type="InterPro" id="IPR008250">
    <property type="entry name" value="ATPase_P-typ_transduc_dom_A_sf"/>
</dbReference>
<dbReference type="InterPro" id="IPR036412">
    <property type="entry name" value="HAD-like_sf"/>
</dbReference>
<dbReference type="InterPro" id="IPR023214">
    <property type="entry name" value="HAD_sf"/>
</dbReference>
<dbReference type="InterPro" id="IPR006539">
    <property type="entry name" value="P-type_ATPase_IV"/>
</dbReference>
<dbReference type="InterPro" id="IPR032631">
    <property type="entry name" value="P-type_ATPase_N"/>
</dbReference>
<dbReference type="InterPro" id="IPR001757">
    <property type="entry name" value="P_typ_ATPase"/>
</dbReference>
<dbReference type="InterPro" id="IPR032630">
    <property type="entry name" value="P_typ_ATPase_c"/>
</dbReference>
<dbReference type="InterPro" id="IPR044492">
    <property type="entry name" value="P_typ_ATPase_HD_dom"/>
</dbReference>
<dbReference type="NCBIfam" id="TIGR01652">
    <property type="entry name" value="ATPase-Plipid"/>
    <property type="match status" value="1"/>
</dbReference>
<dbReference type="NCBIfam" id="TIGR01494">
    <property type="entry name" value="ATPase_P-type"/>
    <property type="match status" value="3"/>
</dbReference>
<dbReference type="PANTHER" id="PTHR24092:SF57">
    <property type="entry name" value="PHOSPHOLIPID-TRANSPORTING ATPASE IF"/>
    <property type="match status" value="1"/>
</dbReference>
<dbReference type="PANTHER" id="PTHR24092">
    <property type="entry name" value="PROBABLE PHOSPHOLIPID-TRANSPORTING ATPASE"/>
    <property type="match status" value="1"/>
</dbReference>
<dbReference type="Pfam" id="PF13246">
    <property type="entry name" value="Cation_ATPase"/>
    <property type="match status" value="1"/>
</dbReference>
<dbReference type="Pfam" id="PF00122">
    <property type="entry name" value="E1-E2_ATPase"/>
    <property type="match status" value="1"/>
</dbReference>
<dbReference type="Pfam" id="PF00702">
    <property type="entry name" value="Hydrolase"/>
    <property type="match status" value="1"/>
</dbReference>
<dbReference type="Pfam" id="PF16212">
    <property type="entry name" value="PhoLip_ATPase_C"/>
    <property type="match status" value="1"/>
</dbReference>
<dbReference type="Pfam" id="PF16209">
    <property type="entry name" value="PhoLip_ATPase_N"/>
    <property type="match status" value="1"/>
</dbReference>
<dbReference type="PRINTS" id="PR00119">
    <property type="entry name" value="CATATPASE"/>
</dbReference>
<dbReference type="SFLD" id="SFLDS00003">
    <property type="entry name" value="Haloacid_Dehalogenase"/>
    <property type="match status" value="1"/>
</dbReference>
<dbReference type="SFLD" id="SFLDF00027">
    <property type="entry name" value="p-type_atpase"/>
    <property type="match status" value="1"/>
</dbReference>
<dbReference type="SUPFAM" id="SSF81653">
    <property type="entry name" value="Calcium ATPase, transduction domain A"/>
    <property type="match status" value="1"/>
</dbReference>
<dbReference type="SUPFAM" id="SSF81665">
    <property type="entry name" value="Calcium ATPase, transmembrane domain M"/>
    <property type="match status" value="1"/>
</dbReference>
<dbReference type="SUPFAM" id="SSF56784">
    <property type="entry name" value="HAD-like"/>
    <property type="match status" value="1"/>
</dbReference>
<dbReference type="SUPFAM" id="SSF81660">
    <property type="entry name" value="Metal cation-transporting ATPase, ATP-binding domain N"/>
    <property type="match status" value="1"/>
</dbReference>
<dbReference type="PROSITE" id="PS00154">
    <property type="entry name" value="ATPASE_E1_E2"/>
    <property type="match status" value="1"/>
</dbReference>
<organism>
    <name type="scientific">Homo sapiens</name>
    <name type="common">Human</name>
    <dbReference type="NCBI Taxonomy" id="9606"/>
    <lineage>
        <taxon>Eukaryota</taxon>
        <taxon>Metazoa</taxon>
        <taxon>Chordata</taxon>
        <taxon>Craniata</taxon>
        <taxon>Vertebrata</taxon>
        <taxon>Euteleostomi</taxon>
        <taxon>Mammalia</taxon>
        <taxon>Eutheria</taxon>
        <taxon>Euarchontoglires</taxon>
        <taxon>Primates</taxon>
        <taxon>Haplorrhini</taxon>
        <taxon>Catarrhini</taxon>
        <taxon>Hominidae</taxon>
        <taxon>Homo</taxon>
    </lineage>
</organism>
<feature type="chain" id="PRO_0000046371" description="Phospholipid-transporting ATPase IF">
    <location>
        <begin position="1"/>
        <end position="1177"/>
    </location>
</feature>
<feature type="topological domain" description="Cytoplasmic" evidence="5">
    <location>
        <begin position="1"/>
        <end position="55"/>
    </location>
</feature>
<feature type="transmembrane region" description="Helical" evidence="5">
    <location>
        <begin position="56"/>
        <end position="77"/>
    </location>
</feature>
<feature type="topological domain" description="Extracellular" evidence="5">
    <location>
        <begin position="78"/>
        <end position="82"/>
    </location>
</feature>
<feature type="transmembrane region" description="Helical" evidence="5">
    <location>
        <begin position="83"/>
        <end position="104"/>
    </location>
</feature>
<feature type="topological domain" description="Cytoplasmic" evidence="5">
    <location>
        <begin position="105"/>
        <end position="289"/>
    </location>
</feature>
<feature type="transmembrane region" description="Helical" evidence="5">
    <location>
        <begin position="290"/>
        <end position="311"/>
    </location>
</feature>
<feature type="topological domain" description="Extracellular" evidence="5">
    <location>
        <begin position="312"/>
        <end position="341"/>
    </location>
</feature>
<feature type="transmembrane region" description="Helical" evidence="5">
    <location>
        <begin position="342"/>
        <end position="359"/>
    </location>
</feature>
<feature type="topological domain" description="Cytoplasmic" evidence="5">
    <location>
        <begin position="360"/>
        <end position="876"/>
    </location>
</feature>
<feature type="transmembrane region" description="Helical" evidence="5">
    <location>
        <begin position="877"/>
        <end position="898"/>
    </location>
</feature>
<feature type="topological domain" description="Extracellular" evidence="5">
    <location>
        <begin position="899"/>
        <end position="910"/>
    </location>
</feature>
<feature type="transmembrane region" description="Helical" evidence="5">
    <location>
        <begin position="911"/>
        <end position="930"/>
    </location>
</feature>
<feature type="topological domain" description="Cytoplasmic" evidence="5">
    <location>
        <begin position="931"/>
        <end position="960"/>
    </location>
</feature>
<feature type="transmembrane region" description="Helical" evidence="5">
    <location>
        <begin position="961"/>
        <end position="982"/>
    </location>
</feature>
<feature type="topological domain" description="Extracellular" evidence="5">
    <location>
        <begin position="983"/>
        <end position="997"/>
    </location>
</feature>
<feature type="transmembrane region" description="Helical" evidence="5">
    <location>
        <begin position="998"/>
        <end position="1020"/>
    </location>
</feature>
<feature type="topological domain" description="Cytoplasmic" evidence="5">
    <location>
        <begin position="1021"/>
        <end position="1025"/>
    </location>
</feature>
<feature type="transmembrane region" description="Helical" evidence="5">
    <location>
        <begin position="1026"/>
        <end position="1047"/>
    </location>
</feature>
<feature type="topological domain" description="Extracellular" evidence="5">
    <location>
        <begin position="1048"/>
        <end position="1065"/>
    </location>
</feature>
<feature type="transmembrane region" description="Helical" evidence="5">
    <location>
        <begin position="1066"/>
        <end position="1090"/>
    </location>
</feature>
<feature type="topological domain" description="Cytoplasmic" evidence="5">
    <location>
        <begin position="1091"/>
        <end position="1177"/>
    </location>
</feature>
<feature type="active site" description="4-aspartylphosphate intermediate" evidence="3">
    <location>
        <position position="407"/>
    </location>
</feature>
<feature type="binding site" evidence="4">
    <location>
        <position position="407"/>
    </location>
    <ligand>
        <name>ATP</name>
        <dbReference type="ChEBI" id="CHEBI:30616"/>
    </ligand>
</feature>
<feature type="binding site" evidence="4">
    <location>
        <position position="407"/>
    </location>
    <ligand>
        <name>Mg(2+)</name>
        <dbReference type="ChEBI" id="CHEBI:18420"/>
    </ligand>
</feature>
<feature type="binding site" evidence="4">
    <location>
        <position position="408"/>
    </location>
    <ligand>
        <name>ATP</name>
        <dbReference type="ChEBI" id="CHEBI:30616"/>
    </ligand>
</feature>
<feature type="binding site" evidence="4">
    <location>
        <position position="409"/>
    </location>
    <ligand>
        <name>ATP</name>
        <dbReference type="ChEBI" id="CHEBI:30616"/>
    </ligand>
</feature>
<feature type="binding site" evidence="4">
    <location>
        <position position="409"/>
    </location>
    <ligand>
        <name>Mg(2+)</name>
        <dbReference type="ChEBI" id="CHEBI:18420"/>
    </ligand>
</feature>
<feature type="binding site" evidence="1">
    <location>
        <position position="531"/>
    </location>
    <ligand>
        <name>ATP</name>
        <dbReference type="ChEBI" id="CHEBI:30616"/>
    </ligand>
</feature>
<feature type="binding site" evidence="4">
    <location>
        <position position="572"/>
    </location>
    <ligand>
        <name>ATP</name>
        <dbReference type="ChEBI" id="CHEBI:30616"/>
    </ligand>
</feature>
<feature type="binding site" evidence="1">
    <location>
        <position position="595"/>
    </location>
    <ligand>
        <name>ATP</name>
        <dbReference type="ChEBI" id="CHEBI:30616"/>
    </ligand>
</feature>
<feature type="binding site" evidence="1">
    <location>
        <position position="626"/>
    </location>
    <ligand>
        <name>ATP</name>
        <dbReference type="ChEBI" id="CHEBI:30616"/>
    </ligand>
</feature>
<feature type="binding site" evidence="1">
    <location>
        <position position="706"/>
    </location>
    <ligand>
        <name>ATP</name>
        <dbReference type="ChEBI" id="CHEBI:30616"/>
    </ligand>
</feature>
<feature type="binding site" evidence="1">
    <location>
        <position position="707"/>
    </location>
    <ligand>
        <name>ATP</name>
        <dbReference type="ChEBI" id="CHEBI:30616"/>
    </ligand>
</feature>
<feature type="binding site" evidence="1">
    <location>
        <position position="708"/>
    </location>
    <ligand>
        <name>ATP</name>
        <dbReference type="ChEBI" id="CHEBI:30616"/>
    </ligand>
</feature>
<feature type="binding site" evidence="1">
    <location>
        <position position="794"/>
    </location>
    <ligand>
        <name>ATP</name>
        <dbReference type="ChEBI" id="CHEBI:30616"/>
    </ligand>
</feature>
<feature type="binding site" evidence="1">
    <location>
        <position position="800"/>
    </location>
    <ligand>
        <name>ATP</name>
        <dbReference type="ChEBI" id="CHEBI:30616"/>
    </ligand>
</feature>
<feature type="binding site" evidence="2">
    <location>
        <position position="821"/>
    </location>
    <ligand>
        <name>Mg(2+)</name>
        <dbReference type="ChEBI" id="CHEBI:18420"/>
    </ligand>
</feature>
<feature type="binding site" evidence="4">
    <location>
        <position position="824"/>
    </location>
    <ligand>
        <name>ATP</name>
        <dbReference type="ChEBI" id="CHEBI:30616"/>
    </ligand>
</feature>
<feature type="binding site" evidence="4">
    <location>
        <position position="825"/>
    </location>
    <ligand>
        <name>ATP</name>
        <dbReference type="ChEBI" id="CHEBI:30616"/>
    </ligand>
</feature>
<feature type="binding site" evidence="2">
    <location>
        <position position="825"/>
    </location>
    <ligand>
        <name>Mg(2+)</name>
        <dbReference type="ChEBI" id="CHEBI:18420"/>
    </ligand>
</feature>
<feature type="modified residue" description="Phosphoserine" evidence="11 12 13">
    <location>
        <position position="1154"/>
    </location>
</feature>
<feature type="mutagenesis site" description="Impairs ATPase activity." evidence="8">
    <original>E</original>
    <variation>Q</variation>
    <location>
        <position position="180"/>
    </location>
</feature>
<comment type="function">
    <text evidence="8">Catalytic component of a P4-ATPase flippase complex which catalyzes the hydrolysis of ATP coupled to the transport of aminophospholipids, phosphatidylserines (PS) and phosphatidylethanolamines (PE), from the outer to the inner leaflet of intracellular membranes (PubMed:30018401). May contribute to the maintenance of membrane lipid asymmetry in endosome compartment (PubMed:30018401).</text>
</comment>
<comment type="catalytic activity">
    <reaction evidence="8">
        <text>ATP + H2O + phospholipidSide 1 = ADP + phosphate + phospholipidSide 2.</text>
        <dbReference type="EC" id="7.6.2.1"/>
    </reaction>
</comment>
<comment type="catalytic activity">
    <reaction evidence="8">
        <text>a 1,2-diacyl-sn-glycero-3-phospho-L-serine(out) + ATP + H2O = a 1,2-diacyl-sn-glycero-3-phospho-L-serine(in) + ADP + phosphate + H(+)</text>
        <dbReference type="Rhea" id="RHEA:38567"/>
        <dbReference type="ChEBI" id="CHEBI:15377"/>
        <dbReference type="ChEBI" id="CHEBI:15378"/>
        <dbReference type="ChEBI" id="CHEBI:30616"/>
        <dbReference type="ChEBI" id="CHEBI:43474"/>
        <dbReference type="ChEBI" id="CHEBI:57262"/>
        <dbReference type="ChEBI" id="CHEBI:456216"/>
    </reaction>
    <physiologicalReaction direction="left-to-right" evidence="10">
        <dbReference type="Rhea" id="RHEA:38568"/>
    </physiologicalReaction>
</comment>
<comment type="catalytic activity">
    <reaction evidence="8">
        <text>a 1,2-diacyl-sn-glycero-3-phosphoethanolamine(out) + ATP + H2O = a 1,2-diacyl-sn-glycero-3-phosphoethanolamine(in) + ADP + phosphate + H(+)</text>
        <dbReference type="Rhea" id="RHEA:66132"/>
        <dbReference type="ChEBI" id="CHEBI:15377"/>
        <dbReference type="ChEBI" id="CHEBI:15378"/>
        <dbReference type="ChEBI" id="CHEBI:30616"/>
        <dbReference type="ChEBI" id="CHEBI:43474"/>
        <dbReference type="ChEBI" id="CHEBI:64612"/>
        <dbReference type="ChEBI" id="CHEBI:456216"/>
    </reaction>
    <physiologicalReaction direction="left-to-right" evidence="10">
        <dbReference type="Rhea" id="RHEA:66133"/>
    </physiologicalReaction>
</comment>
<comment type="cofactor">
    <cofactor evidence="4">
        <name>Mg(2+)</name>
        <dbReference type="ChEBI" id="CHEBI:18420"/>
    </cofactor>
</comment>
<comment type="activity regulation">
    <text evidence="8">The ATPase activity is up-regulated by aminophospholipids PS and PE.</text>
</comment>
<comment type="biophysicochemical properties">
    <kinetics>
        <KM evidence="8">730 uM for ATP</KM>
        <Vmax evidence="8">9.5 umol/min/mg enzyme toward ATP</Vmax>
        <Vmax evidence="8">17.3 umol/min/mg enzyme toward ATP (in the presence of PS)</Vmax>
        <Vmax evidence="8">25.2 umol/min/mg enzyme toward ATP (in the presence of PE)</Vmax>
    </kinetics>
</comment>
<comment type="subunit">
    <text evidence="6 8">Component of a P4-ATPase flippase complex which consists of a catalytic alpha subunit ATP11B and an accessory beta subunit TMEM30A.</text>
</comment>
<comment type="interaction">
    <interactant intactId="EBI-20857228">
        <id>Q9Y2G3</id>
    </interactant>
    <interactant intactId="EBI-21706776">
        <id>P01568</id>
        <label>IFNA21</label>
    </interactant>
    <organismsDiffer>false</organismsDiffer>
    <experiments>2</experiments>
</comment>
<comment type="interaction">
    <interactant intactId="EBI-20857228">
        <id>Q9Y2G3</id>
    </interactant>
    <interactant intactId="EBI-2836942">
        <id>Q9NV96</id>
        <label>TMEM30A</label>
    </interactant>
    <organismsDiffer>false</organismsDiffer>
    <experiments>2</experiments>
</comment>
<comment type="subcellular location">
    <subcellularLocation>
        <location evidence="6">Recycling endosome membrane</location>
        <topology>Multi-pass membrane protein</topology>
    </subcellularLocation>
    <subcellularLocation>
        <location evidence="7">Early endosome</location>
    </subcellularLocation>
    <subcellularLocation>
        <location evidence="6">Endoplasmic reticulum</location>
    </subcellularLocation>
    <subcellularLocation>
        <location evidence="7">Golgi apparatus</location>
        <location evidence="7">trans-Golgi network</location>
    </subcellularLocation>
    <text evidence="6">Exit from the endoplasmic reticulum requires the presence of TMEM30A, but not TMEM30B (PubMed:21914794). In the presence of TMEM30A, mainly located in recycling endosomes (PubMed:21914794).</text>
</comment>
<comment type="similarity">
    <text evidence="9">Belongs to the cation transport ATPase (P-type) (TC 3.A.3) family. Type IV subfamily.</text>
</comment>
<comment type="sequence caution" evidence="9">
    <conflict type="frameshift">
        <sequence resource="EMBL-CDS" id="AAH10630"/>
    </conflict>
</comment>
<comment type="sequence caution" evidence="9">
    <conflict type="miscellaneous discrepancy">
        <sequence resource="EMBL-CDS" id="AAH42180"/>
    </conflict>
    <text>Intron retention.</text>
</comment>
<name>AT11B_HUMAN</name>